<sequence length="339" mass="37761">MRHGDISSSPDTVGVAVVNYKMPRLHTKEQVLENCRNIAKVIGGVKQGLPGLDLIIFPEYSTHGIMYDRQEMFDTAASVPGEETAIFAEACKKNKVWGVFSLTGEKHEQAKKNPYNTLILVNDKGEIVQKYRKILPWCPIECWYPGDKTYVVDGPKGLKVSLIICDDGNYPEIWRDCAMRGAELIVRCQGYMYPAKEQQIAIVKAMAWANQCYVAVANATGFDGVYSYFGHSSIIGFDGHTLGECGEEENGLQYAQLSVQQIRDARKYDQSQNQLFKLLHRGYSGVFASGDGDKGVAECPFEFYKTWVNDPKKAQENVEKFTRPSVGVAACPVGDLPTK</sequence>
<accession>Q1CUK9</accession>
<name>AMIE_HELPH</name>
<dbReference type="EC" id="3.5.1.4" evidence="1"/>
<dbReference type="EMBL" id="CP000241">
    <property type="protein sequence ID" value="ABF84363.1"/>
    <property type="molecule type" value="Genomic_DNA"/>
</dbReference>
<dbReference type="RefSeq" id="WP_001215709.1">
    <property type="nucleotide sequence ID" value="NC_008086.1"/>
</dbReference>
<dbReference type="SMR" id="Q1CUK9"/>
<dbReference type="KEGG" id="hpa:HPAG1_0296"/>
<dbReference type="HOGENOM" id="CLU_071797_0_0_7"/>
<dbReference type="GO" id="GO:0004040">
    <property type="term" value="F:amidase activity"/>
    <property type="evidence" value="ECO:0007669"/>
    <property type="project" value="UniProtKB-UniRule"/>
</dbReference>
<dbReference type="CDD" id="cd07565">
    <property type="entry name" value="aliphatic_amidase"/>
    <property type="match status" value="1"/>
</dbReference>
<dbReference type="FunFam" id="3.60.110.10:FF:000014">
    <property type="entry name" value="Aliphatic amidase"/>
    <property type="match status" value="1"/>
</dbReference>
<dbReference type="Gene3D" id="3.60.110.10">
    <property type="entry name" value="Carbon-nitrogen hydrolase"/>
    <property type="match status" value="1"/>
</dbReference>
<dbReference type="HAMAP" id="MF_01242">
    <property type="entry name" value="Aliphatic_amidase"/>
    <property type="match status" value="1"/>
</dbReference>
<dbReference type="InterPro" id="IPR050345">
    <property type="entry name" value="Aliph_Amidase/BUP"/>
</dbReference>
<dbReference type="InterPro" id="IPR023719">
    <property type="entry name" value="Aliphatic_amidase"/>
</dbReference>
<dbReference type="InterPro" id="IPR003010">
    <property type="entry name" value="C-N_Hydrolase"/>
</dbReference>
<dbReference type="InterPro" id="IPR036526">
    <property type="entry name" value="C-N_Hydrolase_sf"/>
</dbReference>
<dbReference type="NCBIfam" id="NF009802">
    <property type="entry name" value="PRK13286.1"/>
    <property type="match status" value="1"/>
</dbReference>
<dbReference type="PANTHER" id="PTHR43674:SF14">
    <property type="entry name" value="ALIPHATIC AMIDASE"/>
    <property type="match status" value="1"/>
</dbReference>
<dbReference type="PANTHER" id="PTHR43674">
    <property type="entry name" value="NITRILASE C965.09-RELATED"/>
    <property type="match status" value="1"/>
</dbReference>
<dbReference type="Pfam" id="PF00795">
    <property type="entry name" value="CN_hydrolase"/>
    <property type="match status" value="1"/>
</dbReference>
<dbReference type="SUPFAM" id="SSF56317">
    <property type="entry name" value="Carbon-nitrogen hydrolase"/>
    <property type="match status" value="1"/>
</dbReference>
<dbReference type="PROSITE" id="PS50263">
    <property type="entry name" value="CN_HYDROLASE"/>
    <property type="match status" value="1"/>
</dbReference>
<protein>
    <recommendedName>
        <fullName evidence="1">Aliphatic amidase</fullName>
        <ecNumber evidence="1">3.5.1.4</ecNumber>
    </recommendedName>
    <alternativeName>
        <fullName evidence="1">Acylamide amidohydrolase</fullName>
    </alternativeName>
</protein>
<proteinExistence type="inferred from homology"/>
<feature type="chain" id="PRO_1000067048" description="Aliphatic amidase">
    <location>
        <begin position="1"/>
        <end position="339"/>
    </location>
</feature>
<feature type="domain" description="CN hydrolase" evidence="2">
    <location>
        <begin position="13"/>
        <end position="259"/>
    </location>
</feature>
<feature type="active site" description="Proton acceptor" evidence="1">
    <location>
        <position position="59"/>
    </location>
</feature>
<feature type="active site" description="Proton donor" evidence="1">
    <location>
        <position position="133"/>
    </location>
</feature>
<feature type="active site" description="Nucleophile" evidence="1">
    <location>
        <position position="165"/>
    </location>
</feature>
<organism>
    <name type="scientific">Helicobacter pylori (strain HPAG1)</name>
    <dbReference type="NCBI Taxonomy" id="357544"/>
    <lineage>
        <taxon>Bacteria</taxon>
        <taxon>Pseudomonadati</taxon>
        <taxon>Campylobacterota</taxon>
        <taxon>Epsilonproteobacteria</taxon>
        <taxon>Campylobacterales</taxon>
        <taxon>Helicobacteraceae</taxon>
        <taxon>Helicobacter</taxon>
    </lineage>
</organism>
<comment type="function">
    <text evidence="1">Catalyzes the hydrolysis of short-chain aliphatic amides to their corresponding organic acids with release of ammonia.</text>
</comment>
<comment type="function">
    <text evidence="1">Also exhibits in vitro acyl transferase activity, transferring the acyl moiety of short-chain amides to hydroxylamine to form hydroxamates.</text>
</comment>
<comment type="catalytic activity">
    <reaction evidence="1">
        <text>a monocarboxylic acid amide + H2O = a monocarboxylate + NH4(+)</text>
        <dbReference type="Rhea" id="RHEA:12020"/>
        <dbReference type="ChEBI" id="CHEBI:15377"/>
        <dbReference type="ChEBI" id="CHEBI:28938"/>
        <dbReference type="ChEBI" id="CHEBI:35757"/>
        <dbReference type="ChEBI" id="CHEBI:83628"/>
        <dbReference type="EC" id="3.5.1.4"/>
    </reaction>
</comment>
<comment type="similarity">
    <text evidence="1">Belongs to the carbon-nitrogen hydrolase superfamily. Aliphatic amidase family.</text>
</comment>
<reference key="1">
    <citation type="journal article" date="2006" name="Proc. Natl. Acad. Sci. U.S.A.">
        <title>The complete genome sequence of a chronic atrophic gastritis Helicobacter pylori strain: evolution during disease progression.</title>
        <authorList>
            <person name="Oh J.D."/>
            <person name="Kling-Baeckhed H."/>
            <person name="Giannakis M."/>
            <person name="Xu J."/>
            <person name="Fulton R.S."/>
            <person name="Fulton L.A."/>
            <person name="Cordum H.S."/>
            <person name="Wang C."/>
            <person name="Elliott G."/>
            <person name="Edwards J."/>
            <person name="Mardis E.R."/>
            <person name="Engstrand L.G."/>
            <person name="Gordon J.I."/>
        </authorList>
    </citation>
    <scope>NUCLEOTIDE SEQUENCE [LARGE SCALE GENOMIC DNA]</scope>
    <source>
        <strain>HPAG1</strain>
    </source>
</reference>
<keyword id="KW-0378">Hydrolase</keyword>
<evidence type="ECO:0000255" key="1">
    <source>
        <dbReference type="HAMAP-Rule" id="MF_01242"/>
    </source>
</evidence>
<evidence type="ECO:0000255" key="2">
    <source>
        <dbReference type="PROSITE-ProRule" id="PRU00054"/>
    </source>
</evidence>
<gene>
    <name evidence="1" type="primary">amiE</name>
    <name type="ordered locus">HPAG1_0296</name>
</gene>